<proteinExistence type="inferred from homology"/>
<name>ATPB_STRSY</name>
<comment type="function">
    <text evidence="1">Produces ATP from ADP in the presence of a proton gradient across the membrane. The catalytic sites are hosted primarily by the beta subunits.</text>
</comment>
<comment type="catalytic activity">
    <reaction evidence="1">
        <text>ATP + H2O + 4 H(+)(in) = ADP + phosphate + 5 H(+)(out)</text>
        <dbReference type="Rhea" id="RHEA:57720"/>
        <dbReference type="ChEBI" id="CHEBI:15377"/>
        <dbReference type="ChEBI" id="CHEBI:15378"/>
        <dbReference type="ChEBI" id="CHEBI:30616"/>
        <dbReference type="ChEBI" id="CHEBI:43474"/>
        <dbReference type="ChEBI" id="CHEBI:456216"/>
        <dbReference type="EC" id="7.1.2.2"/>
    </reaction>
</comment>
<comment type="subunit">
    <text evidence="1">F-type ATPases have 2 components, CF(1) - the catalytic core - and CF(0) - the membrane proton channel. CF(1) has five subunits: alpha(3), beta(3), gamma(1), delta(1), epsilon(1). CF(0) has three main subunits: a(1), b(2) and c(9-12). The alpha and beta chains form an alternating ring which encloses part of the gamma chain. CF(1) is attached to CF(0) by a central stalk formed by the gamma and epsilon chains, while a peripheral stalk is formed by the delta and b chains.</text>
</comment>
<comment type="subcellular location">
    <subcellularLocation>
        <location evidence="1">Cell membrane</location>
        <topology evidence="1">Peripheral membrane protein</topology>
    </subcellularLocation>
</comment>
<comment type="similarity">
    <text evidence="1">Belongs to the ATPase alpha/beta chains family.</text>
</comment>
<comment type="sequence caution" evidence="2">
    <conflict type="erroneous initiation">
        <sequence resource="EMBL-CDS" id="ABP90138"/>
    </conflict>
</comment>
<evidence type="ECO:0000255" key="1">
    <source>
        <dbReference type="HAMAP-Rule" id="MF_01347"/>
    </source>
</evidence>
<evidence type="ECO:0000305" key="2"/>
<reference key="1">
    <citation type="journal article" date="2007" name="PLoS ONE">
        <title>A glimpse of streptococcal toxic shock syndrome from comparative genomics of S. suis 2 Chinese isolates.</title>
        <authorList>
            <person name="Chen C."/>
            <person name="Tang J."/>
            <person name="Dong W."/>
            <person name="Wang C."/>
            <person name="Feng Y."/>
            <person name="Wang J."/>
            <person name="Zheng F."/>
            <person name="Pan X."/>
            <person name="Liu D."/>
            <person name="Li M."/>
            <person name="Song Y."/>
            <person name="Zhu X."/>
            <person name="Sun H."/>
            <person name="Feng T."/>
            <person name="Guo Z."/>
            <person name="Ju A."/>
            <person name="Ge J."/>
            <person name="Dong Y."/>
            <person name="Sun W."/>
            <person name="Jiang Y."/>
            <person name="Wang J."/>
            <person name="Yan J."/>
            <person name="Yang H."/>
            <person name="Wang X."/>
            <person name="Gao G.F."/>
            <person name="Yang R."/>
            <person name="Wang J."/>
            <person name="Yu J."/>
        </authorList>
    </citation>
    <scope>NUCLEOTIDE SEQUENCE [LARGE SCALE GENOMIC DNA]</scope>
    <source>
        <strain>05ZYH33</strain>
    </source>
</reference>
<protein>
    <recommendedName>
        <fullName evidence="1">ATP synthase subunit beta</fullName>
        <ecNumber evidence="1">7.1.2.2</ecNumber>
    </recommendedName>
    <alternativeName>
        <fullName evidence="1">ATP synthase F1 sector subunit beta</fullName>
    </alternativeName>
    <alternativeName>
        <fullName evidence="1">F-ATPase subunit beta</fullName>
    </alternativeName>
</protein>
<dbReference type="EC" id="7.1.2.2" evidence="1"/>
<dbReference type="EMBL" id="CP000407">
    <property type="protein sequence ID" value="ABP90138.1"/>
    <property type="status" value="ALT_INIT"/>
    <property type="molecule type" value="Genomic_DNA"/>
</dbReference>
<dbReference type="SMR" id="A4VVJ9"/>
<dbReference type="STRING" id="391295.SSU05_1172"/>
<dbReference type="KEGG" id="ssu:SSU05_1172"/>
<dbReference type="eggNOG" id="COG0055">
    <property type="taxonomic scope" value="Bacteria"/>
</dbReference>
<dbReference type="HOGENOM" id="CLU_022398_0_2_9"/>
<dbReference type="GO" id="GO:0005886">
    <property type="term" value="C:plasma membrane"/>
    <property type="evidence" value="ECO:0007669"/>
    <property type="project" value="UniProtKB-SubCell"/>
</dbReference>
<dbReference type="GO" id="GO:0045259">
    <property type="term" value="C:proton-transporting ATP synthase complex"/>
    <property type="evidence" value="ECO:0007669"/>
    <property type="project" value="UniProtKB-KW"/>
</dbReference>
<dbReference type="GO" id="GO:0005524">
    <property type="term" value="F:ATP binding"/>
    <property type="evidence" value="ECO:0007669"/>
    <property type="project" value="UniProtKB-UniRule"/>
</dbReference>
<dbReference type="GO" id="GO:0016887">
    <property type="term" value="F:ATP hydrolysis activity"/>
    <property type="evidence" value="ECO:0007669"/>
    <property type="project" value="InterPro"/>
</dbReference>
<dbReference type="GO" id="GO:0046933">
    <property type="term" value="F:proton-transporting ATP synthase activity, rotational mechanism"/>
    <property type="evidence" value="ECO:0007669"/>
    <property type="project" value="UniProtKB-UniRule"/>
</dbReference>
<dbReference type="CDD" id="cd18110">
    <property type="entry name" value="ATP-synt_F1_beta_C"/>
    <property type="match status" value="1"/>
</dbReference>
<dbReference type="CDD" id="cd18115">
    <property type="entry name" value="ATP-synt_F1_beta_N"/>
    <property type="match status" value="1"/>
</dbReference>
<dbReference type="CDD" id="cd01133">
    <property type="entry name" value="F1-ATPase_beta_CD"/>
    <property type="match status" value="1"/>
</dbReference>
<dbReference type="FunFam" id="1.10.1140.10:FF:000001">
    <property type="entry name" value="ATP synthase subunit beta"/>
    <property type="match status" value="1"/>
</dbReference>
<dbReference type="FunFam" id="2.40.10.170:FF:000005">
    <property type="entry name" value="ATP synthase subunit beta"/>
    <property type="match status" value="1"/>
</dbReference>
<dbReference type="FunFam" id="3.40.50.300:FF:000004">
    <property type="entry name" value="ATP synthase subunit beta"/>
    <property type="match status" value="1"/>
</dbReference>
<dbReference type="Gene3D" id="2.40.10.170">
    <property type="match status" value="1"/>
</dbReference>
<dbReference type="Gene3D" id="1.10.1140.10">
    <property type="entry name" value="Bovine Mitochondrial F1-atpase, Atp Synthase Beta Chain, Chain D, domain 3"/>
    <property type="match status" value="1"/>
</dbReference>
<dbReference type="Gene3D" id="3.40.50.300">
    <property type="entry name" value="P-loop containing nucleotide triphosphate hydrolases"/>
    <property type="match status" value="1"/>
</dbReference>
<dbReference type="HAMAP" id="MF_01347">
    <property type="entry name" value="ATP_synth_beta_bact"/>
    <property type="match status" value="1"/>
</dbReference>
<dbReference type="InterPro" id="IPR003593">
    <property type="entry name" value="AAA+_ATPase"/>
</dbReference>
<dbReference type="InterPro" id="IPR055190">
    <property type="entry name" value="ATP-synt_VA_C"/>
</dbReference>
<dbReference type="InterPro" id="IPR005722">
    <property type="entry name" value="ATP_synth_F1_bsu"/>
</dbReference>
<dbReference type="InterPro" id="IPR020003">
    <property type="entry name" value="ATPase_a/bsu_AS"/>
</dbReference>
<dbReference type="InterPro" id="IPR050053">
    <property type="entry name" value="ATPase_alpha/beta_chains"/>
</dbReference>
<dbReference type="InterPro" id="IPR004100">
    <property type="entry name" value="ATPase_F1/V1/A1_a/bsu_N"/>
</dbReference>
<dbReference type="InterPro" id="IPR036121">
    <property type="entry name" value="ATPase_F1/V1/A1_a/bsu_N_sf"/>
</dbReference>
<dbReference type="InterPro" id="IPR000194">
    <property type="entry name" value="ATPase_F1/V1/A1_a/bsu_nucl-bd"/>
</dbReference>
<dbReference type="InterPro" id="IPR024034">
    <property type="entry name" value="ATPase_F1/V1_b/a_C"/>
</dbReference>
<dbReference type="InterPro" id="IPR027417">
    <property type="entry name" value="P-loop_NTPase"/>
</dbReference>
<dbReference type="NCBIfam" id="TIGR01039">
    <property type="entry name" value="atpD"/>
    <property type="match status" value="1"/>
</dbReference>
<dbReference type="PANTHER" id="PTHR15184">
    <property type="entry name" value="ATP SYNTHASE"/>
    <property type="match status" value="1"/>
</dbReference>
<dbReference type="PANTHER" id="PTHR15184:SF71">
    <property type="entry name" value="ATP SYNTHASE SUBUNIT BETA, MITOCHONDRIAL"/>
    <property type="match status" value="1"/>
</dbReference>
<dbReference type="Pfam" id="PF00006">
    <property type="entry name" value="ATP-synt_ab"/>
    <property type="match status" value="1"/>
</dbReference>
<dbReference type="Pfam" id="PF02874">
    <property type="entry name" value="ATP-synt_ab_N"/>
    <property type="match status" value="1"/>
</dbReference>
<dbReference type="Pfam" id="PF22919">
    <property type="entry name" value="ATP-synt_VA_C"/>
    <property type="match status" value="1"/>
</dbReference>
<dbReference type="SMART" id="SM00382">
    <property type="entry name" value="AAA"/>
    <property type="match status" value="1"/>
</dbReference>
<dbReference type="SUPFAM" id="SSF47917">
    <property type="entry name" value="C-terminal domain of alpha and beta subunits of F1 ATP synthase"/>
    <property type="match status" value="1"/>
</dbReference>
<dbReference type="SUPFAM" id="SSF50615">
    <property type="entry name" value="N-terminal domain of alpha and beta subunits of F1 ATP synthase"/>
    <property type="match status" value="1"/>
</dbReference>
<dbReference type="SUPFAM" id="SSF52540">
    <property type="entry name" value="P-loop containing nucleoside triphosphate hydrolases"/>
    <property type="match status" value="1"/>
</dbReference>
<dbReference type="PROSITE" id="PS00152">
    <property type="entry name" value="ATPASE_ALPHA_BETA"/>
    <property type="match status" value="1"/>
</dbReference>
<accession>A4VVJ9</accession>
<gene>
    <name evidence="1" type="primary">atpD</name>
    <name type="ordered locus">SSU05_1172</name>
</gene>
<organism>
    <name type="scientific">Streptococcus suis (strain 05ZYH33)</name>
    <dbReference type="NCBI Taxonomy" id="391295"/>
    <lineage>
        <taxon>Bacteria</taxon>
        <taxon>Bacillati</taxon>
        <taxon>Bacillota</taxon>
        <taxon>Bacilli</taxon>
        <taxon>Lactobacillales</taxon>
        <taxon>Streptococcaceae</taxon>
        <taxon>Streptococcus</taxon>
    </lineage>
</organism>
<sequence>MSSGKITQVVGPVVDVAFAAEDKLPEINNALVVYKNDDSKQKVVLEVALELGDGVVRTIAMESTDGLTRGMEVLDTGRPISVPVGKETLGRVFNVLGDTIDLEESFPADFEREPIHKKAPAFDELSTSSEILETGIKVIDLLAPYLKGGKVGLFGGAGVGKTVLIQELIHNIAQEHGGISVFTGVGERTREGNDLYWEMKESGVIEKTAMVFGQMNEPPGARMRVALTGLTIAEYFRDVEGQDVLLFIDNIFRFTQAGSEVSALLGRMPSAVGYQPTLATEMGQLQERITSTKKGSVTSIQAIYVPADDYTDPAPATAFAHLDSTTNLERKLTQLGIYPAVDPLASSSRALAPQIVGEEHYAVAMEVKRVLQRYQELQDIIAILGMDELSDEEKTLVGRARRIQFFLSQNFNVAEQFTGMPGSYVPVAETVKGFKEILDGKHDHLPEDAFRNVGSIEDVVAKAAKMKF</sequence>
<keyword id="KW-0066">ATP synthesis</keyword>
<keyword id="KW-0067">ATP-binding</keyword>
<keyword id="KW-1003">Cell membrane</keyword>
<keyword id="KW-0139">CF(1)</keyword>
<keyword id="KW-0375">Hydrogen ion transport</keyword>
<keyword id="KW-0406">Ion transport</keyword>
<keyword id="KW-0472">Membrane</keyword>
<keyword id="KW-0547">Nucleotide-binding</keyword>
<keyword id="KW-1278">Translocase</keyword>
<keyword id="KW-0813">Transport</keyword>
<feature type="chain" id="PRO_0000339592" description="ATP synthase subunit beta">
    <location>
        <begin position="1"/>
        <end position="468"/>
    </location>
</feature>
<feature type="binding site" evidence="1">
    <location>
        <begin position="155"/>
        <end position="162"/>
    </location>
    <ligand>
        <name>ATP</name>
        <dbReference type="ChEBI" id="CHEBI:30616"/>
    </ligand>
</feature>